<gene>
    <name type="ordered locus">MAP_2076c</name>
</gene>
<comment type="function">
    <text evidence="1">Exhibits S-adenosyl-L-methionine-dependent methyltransferase activity.</text>
</comment>
<comment type="similarity">
    <text evidence="2">Belongs to the UPF0677 family.</text>
</comment>
<protein>
    <recommendedName>
        <fullName>Putative S-adenosyl-L-methionine-dependent methyltransferase MAP_2076c</fullName>
        <ecNumber>2.1.1.-</ecNumber>
    </recommendedName>
</protein>
<evidence type="ECO:0000250" key="1"/>
<evidence type="ECO:0000305" key="2"/>
<sequence length="310" mass="33751">MPRTDNDTWDLSTSVGATATMVAAARAIATNADNPLIEDRFAEPLVRAVGVDFFTRWVTGDLVAADVDDHDSGWKLEHMPVAMAARTRFFDSFFQAATQAGIRQAVILASGLDARAYRLAWPAGTTVFEIDQPQVIEFKTATLAKLGATPQATLRTVAVDLRDDWPKALVEAGFDKGQPTAWIAEGLFGYLPPEAQDRLLDNITALSADGSRLACEAIPDMSEVDTEKAQEMMRRATAKWREHGFDLEFGDLGYQGERNDVAEYLDGLGWRSVGVPMSQLLADAGLEAIPQTNDSVSVADTIYYSSVLAK</sequence>
<reference key="1">
    <citation type="journal article" date="2005" name="Proc. Natl. Acad. Sci. U.S.A.">
        <title>The complete genome sequence of Mycobacterium avium subspecies paratuberculosis.</title>
        <authorList>
            <person name="Li L."/>
            <person name="Bannantine J.P."/>
            <person name="Zhang Q."/>
            <person name="Amonsin A."/>
            <person name="May B.J."/>
            <person name="Alt D."/>
            <person name="Banerji N."/>
            <person name="Kanjilal S."/>
            <person name="Kapur V."/>
        </authorList>
    </citation>
    <scope>NUCLEOTIDE SEQUENCE [LARGE SCALE GENOMIC DNA]</scope>
    <source>
        <strain>ATCC BAA-968 / K-10</strain>
    </source>
</reference>
<accession>Q73Y81</accession>
<organism>
    <name type="scientific">Mycolicibacterium paratuberculosis (strain ATCC BAA-968 / K-10)</name>
    <name type="common">Mycobacterium paratuberculosis</name>
    <dbReference type="NCBI Taxonomy" id="262316"/>
    <lineage>
        <taxon>Bacteria</taxon>
        <taxon>Bacillati</taxon>
        <taxon>Actinomycetota</taxon>
        <taxon>Actinomycetes</taxon>
        <taxon>Mycobacteriales</taxon>
        <taxon>Mycobacteriaceae</taxon>
        <taxon>Mycobacterium</taxon>
        <taxon>Mycobacterium avium complex (MAC)</taxon>
    </lineage>
</organism>
<name>Y2076_MYCPA</name>
<keyword id="KW-0489">Methyltransferase</keyword>
<keyword id="KW-1185">Reference proteome</keyword>
<keyword id="KW-0949">S-adenosyl-L-methionine</keyword>
<keyword id="KW-0808">Transferase</keyword>
<feature type="chain" id="PRO_0000361177" description="Putative S-adenosyl-L-methionine-dependent methyltransferase MAP_2076c">
    <location>
        <begin position="1"/>
        <end position="310"/>
    </location>
</feature>
<feature type="binding site" evidence="1">
    <location>
        <position position="131"/>
    </location>
    <ligand>
        <name>S-adenosyl-L-methionine</name>
        <dbReference type="ChEBI" id="CHEBI:59789"/>
    </ligand>
</feature>
<feature type="binding site" evidence="1">
    <location>
        <begin position="160"/>
        <end position="161"/>
    </location>
    <ligand>
        <name>S-adenosyl-L-methionine</name>
        <dbReference type="ChEBI" id="CHEBI:59789"/>
    </ligand>
</feature>
<proteinExistence type="inferred from homology"/>
<dbReference type="EC" id="2.1.1.-"/>
<dbReference type="EMBL" id="AE016958">
    <property type="protein sequence ID" value="AAS04393.1"/>
    <property type="molecule type" value="Genomic_DNA"/>
</dbReference>
<dbReference type="RefSeq" id="WP_003872446.1">
    <property type="nucleotide sequence ID" value="NZ_CP106873.1"/>
</dbReference>
<dbReference type="SMR" id="Q73Y81"/>
<dbReference type="STRING" id="262316.MAP_2076c"/>
<dbReference type="KEGG" id="mpa:MAP_2076c"/>
<dbReference type="eggNOG" id="COG3315">
    <property type="taxonomic scope" value="Bacteria"/>
</dbReference>
<dbReference type="HOGENOM" id="CLU_056160_2_1_11"/>
<dbReference type="Proteomes" id="UP000000580">
    <property type="component" value="Chromosome"/>
</dbReference>
<dbReference type="GO" id="GO:0008168">
    <property type="term" value="F:methyltransferase activity"/>
    <property type="evidence" value="ECO:0007669"/>
    <property type="project" value="UniProtKB-KW"/>
</dbReference>
<dbReference type="GO" id="GO:0032259">
    <property type="term" value="P:methylation"/>
    <property type="evidence" value="ECO:0007669"/>
    <property type="project" value="UniProtKB-KW"/>
</dbReference>
<dbReference type="FunFam" id="3.40.50.150:FF:000152">
    <property type="entry name" value="S-adenosyl-L-methionine-dependent methyltransferase"/>
    <property type="match status" value="1"/>
</dbReference>
<dbReference type="Gene3D" id="3.40.50.150">
    <property type="entry name" value="Vaccinia Virus protein VP39"/>
    <property type="match status" value="1"/>
</dbReference>
<dbReference type="InterPro" id="IPR007213">
    <property type="entry name" value="Ppm1/Ppm2/Tcmp"/>
</dbReference>
<dbReference type="InterPro" id="IPR029063">
    <property type="entry name" value="SAM-dependent_MTases_sf"/>
</dbReference>
<dbReference type="InterPro" id="IPR011610">
    <property type="entry name" value="SAM_mthyl_Trfase_ML2640-like"/>
</dbReference>
<dbReference type="NCBIfam" id="TIGR00027">
    <property type="entry name" value="mthyl_TIGR00027"/>
    <property type="match status" value="1"/>
</dbReference>
<dbReference type="PANTHER" id="PTHR43619">
    <property type="entry name" value="S-ADENOSYL-L-METHIONINE-DEPENDENT METHYLTRANSFERASE YKTD-RELATED"/>
    <property type="match status" value="1"/>
</dbReference>
<dbReference type="PANTHER" id="PTHR43619:SF2">
    <property type="entry name" value="S-ADENOSYL-L-METHIONINE-DEPENDENT METHYLTRANSFERASES SUPERFAMILY PROTEIN"/>
    <property type="match status" value="1"/>
</dbReference>
<dbReference type="Pfam" id="PF04072">
    <property type="entry name" value="LCM"/>
    <property type="match status" value="1"/>
</dbReference>
<dbReference type="SUPFAM" id="SSF53335">
    <property type="entry name" value="S-adenosyl-L-methionine-dependent methyltransferases"/>
    <property type="match status" value="1"/>
</dbReference>